<organism>
    <name type="scientific">Haemophilus influenzae (strain PittGG)</name>
    <dbReference type="NCBI Taxonomy" id="374931"/>
    <lineage>
        <taxon>Bacteria</taxon>
        <taxon>Pseudomonadati</taxon>
        <taxon>Pseudomonadota</taxon>
        <taxon>Gammaproteobacteria</taxon>
        <taxon>Pasteurellales</taxon>
        <taxon>Pasteurellaceae</taxon>
        <taxon>Haemophilus</taxon>
    </lineage>
</organism>
<protein>
    <recommendedName>
        <fullName evidence="1">Integration host factor subunit beta</fullName>
        <shortName evidence="1">IHF-beta</shortName>
    </recommendedName>
</protein>
<evidence type="ECO:0000255" key="1">
    <source>
        <dbReference type="HAMAP-Rule" id="MF_00381"/>
    </source>
</evidence>
<dbReference type="EMBL" id="CP000672">
    <property type="protein sequence ID" value="ABQ99438.1"/>
    <property type="molecule type" value="Genomic_DNA"/>
</dbReference>
<dbReference type="SMR" id="A5UF83"/>
<dbReference type="KEGG" id="hiq:CGSHiGG_01900"/>
<dbReference type="HOGENOM" id="CLU_105066_2_0_6"/>
<dbReference type="Proteomes" id="UP000001990">
    <property type="component" value="Chromosome"/>
</dbReference>
<dbReference type="GO" id="GO:0005694">
    <property type="term" value="C:chromosome"/>
    <property type="evidence" value="ECO:0007669"/>
    <property type="project" value="InterPro"/>
</dbReference>
<dbReference type="GO" id="GO:0005829">
    <property type="term" value="C:cytosol"/>
    <property type="evidence" value="ECO:0007669"/>
    <property type="project" value="TreeGrafter"/>
</dbReference>
<dbReference type="GO" id="GO:0003677">
    <property type="term" value="F:DNA binding"/>
    <property type="evidence" value="ECO:0007669"/>
    <property type="project" value="UniProtKB-UniRule"/>
</dbReference>
<dbReference type="GO" id="GO:0030527">
    <property type="term" value="F:structural constituent of chromatin"/>
    <property type="evidence" value="ECO:0007669"/>
    <property type="project" value="InterPro"/>
</dbReference>
<dbReference type="GO" id="GO:0006310">
    <property type="term" value="P:DNA recombination"/>
    <property type="evidence" value="ECO:0007669"/>
    <property type="project" value="UniProtKB-UniRule"/>
</dbReference>
<dbReference type="GO" id="GO:0006355">
    <property type="term" value="P:regulation of DNA-templated transcription"/>
    <property type="evidence" value="ECO:0007669"/>
    <property type="project" value="UniProtKB-UniRule"/>
</dbReference>
<dbReference type="GO" id="GO:0006417">
    <property type="term" value="P:regulation of translation"/>
    <property type="evidence" value="ECO:0007669"/>
    <property type="project" value="UniProtKB-UniRule"/>
</dbReference>
<dbReference type="CDD" id="cd13836">
    <property type="entry name" value="IHF_B"/>
    <property type="match status" value="1"/>
</dbReference>
<dbReference type="FunFam" id="4.10.520.10:FF:000003">
    <property type="entry name" value="Integration host factor subunit beta"/>
    <property type="match status" value="1"/>
</dbReference>
<dbReference type="Gene3D" id="4.10.520.10">
    <property type="entry name" value="IHF-like DNA-binding proteins"/>
    <property type="match status" value="1"/>
</dbReference>
<dbReference type="HAMAP" id="MF_00381">
    <property type="entry name" value="IHF_beta"/>
    <property type="match status" value="1"/>
</dbReference>
<dbReference type="InterPro" id="IPR000119">
    <property type="entry name" value="Hist_DNA-bd"/>
</dbReference>
<dbReference type="InterPro" id="IPR020816">
    <property type="entry name" value="Histone-like_DNA-bd_CS"/>
</dbReference>
<dbReference type="InterPro" id="IPR010992">
    <property type="entry name" value="IHF-like_DNA-bd_dom_sf"/>
</dbReference>
<dbReference type="InterPro" id="IPR005685">
    <property type="entry name" value="IHF_beta"/>
</dbReference>
<dbReference type="NCBIfam" id="TIGR00988">
    <property type="entry name" value="hip"/>
    <property type="match status" value="1"/>
</dbReference>
<dbReference type="NCBIfam" id="NF001222">
    <property type="entry name" value="PRK00199.1"/>
    <property type="match status" value="1"/>
</dbReference>
<dbReference type="PANTHER" id="PTHR33175">
    <property type="entry name" value="DNA-BINDING PROTEIN HU"/>
    <property type="match status" value="1"/>
</dbReference>
<dbReference type="PANTHER" id="PTHR33175:SF5">
    <property type="entry name" value="INTEGRATION HOST FACTOR SUBUNIT BETA"/>
    <property type="match status" value="1"/>
</dbReference>
<dbReference type="Pfam" id="PF00216">
    <property type="entry name" value="Bac_DNA_binding"/>
    <property type="match status" value="1"/>
</dbReference>
<dbReference type="PRINTS" id="PR01727">
    <property type="entry name" value="DNABINDINGHU"/>
</dbReference>
<dbReference type="SMART" id="SM00411">
    <property type="entry name" value="BHL"/>
    <property type="match status" value="1"/>
</dbReference>
<dbReference type="SUPFAM" id="SSF47729">
    <property type="entry name" value="IHF-like DNA-binding proteins"/>
    <property type="match status" value="1"/>
</dbReference>
<dbReference type="PROSITE" id="PS00045">
    <property type="entry name" value="HISTONE_LIKE"/>
    <property type="match status" value="1"/>
</dbReference>
<feature type="chain" id="PRO_1000060607" description="Integration host factor subunit beta">
    <location>
        <begin position="1"/>
        <end position="94"/>
    </location>
</feature>
<name>IHFB_HAEIG</name>
<gene>
    <name evidence="1" type="primary">ihfB</name>
    <name evidence="1" type="synonym">himD</name>
    <name type="ordered locus">CGSHiGG_01900</name>
</gene>
<accession>A5UF83</accession>
<sequence>MTKSELMEKLSAKQPTLPAKEIENMVKDILEFISQSLENGDRVEVRGFGSFSLHHRQPRLGRNPKTGDSVNLSAKSVPYFKAGKELKARVDVQA</sequence>
<proteinExistence type="inferred from homology"/>
<comment type="function">
    <text evidence="1">This protein is one of the two subunits of integration host factor, a specific DNA-binding protein that functions in genetic recombination as well as in transcriptional and translational control.</text>
</comment>
<comment type="subunit">
    <text evidence="1">Heterodimer of an alpha and a beta chain.</text>
</comment>
<comment type="similarity">
    <text evidence="1">Belongs to the bacterial histone-like protein family.</text>
</comment>
<keyword id="KW-0233">DNA recombination</keyword>
<keyword id="KW-0238">DNA-binding</keyword>
<keyword id="KW-0804">Transcription</keyword>
<keyword id="KW-0805">Transcription regulation</keyword>
<keyword id="KW-0810">Translation regulation</keyword>
<reference key="1">
    <citation type="journal article" date="2007" name="Genome Biol.">
        <title>Characterization and modeling of the Haemophilus influenzae core and supragenomes based on the complete genomic sequences of Rd and 12 clinical nontypeable strains.</title>
        <authorList>
            <person name="Hogg J.S."/>
            <person name="Hu F.Z."/>
            <person name="Janto B."/>
            <person name="Boissy R."/>
            <person name="Hayes J."/>
            <person name="Keefe R."/>
            <person name="Post J.C."/>
            <person name="Ehrlich G.D."/>
        </authorList>
    </citation>
    <scope>NUCLEOTIDE SEQUENCE [LARGE SCALE GENOMIC DNA]</scope>
    <source>
        <strain>PittGG</strain>
    </source>
</reference>